<protein>
    <recommendedName>
        <fullName evidence="1">Iron-sulfur cluster assembly protein CyaY</fullName>
    </recommendedName>
</protein>
<gene>
    <name evidence="1" type="primary">cyaY</name>
    <name type="ordered locus">BWG_3486</name>
</gene>
<name>CYAY_ECOBW</name>
<reference key="1">
    <citation type="journal article" date="2009" name="J. Bacteriol.">
        <title>Genomic sequencing reveals regulatory mutations and recombinational events in the widely used MC4100 lineage of Escherichia coli K-12.</title>
        <authorList>
            <person name="Ferenci T."/>
            <person name="Zhou Z."/>
            <person name="Betteridge T."/>
            <person name="Ren Y."/>
            <person name="Liu Y."/>
            <person name="Feng L."/>
            <person name="Reeves P.R."/>
            <person name="Wang L."/>
        </authorList>
    </citation>
    <scope>NUCLEOTIDE SEQUENCE [LARGE SCALE GENOMIC DNA]</scope>
    <source>
        <strain>K12 / MC4100 / BW2952</strain>
    </source>
</reference>
<dbReference type="EMBL" id="CP001396">
    <property type="protein sequence ID" value="ACR63140.1"/>
    <property type="molecule type" value="Genomic_DNA"/>
</dbReference>
<dbReference type="RefSeq" id="WP_000999947.1">
    <property type="nucleotide sequence ID" value="NC_012759.1"/>
</dbReference>
<dbReference type="SMR" id="C4ZZ71"/>
<dbReference type="GeneID" id="93778137"/>
<dbReference type="KEGG" id="ebw:BWG_3486"/>
<dbReference type="HOGENOM" id="CLU_080880_3_0_6"/>
<dbReference type="GO" id="GO:0005829">
    <property type="term" value="C:cytosol"/>
    <property type="evidence" value="ECO:0007669"/>
    <property type="project" value="TreeGrafter"/>
</dbReference>
<dbReference type="GO" id="GO:0008199">
    <property type="term" value="F:ferric iron binding"/>
    <property type="evidence" value="ECO:0007669"/>
    <property type="project" value="InterPro"/>
</dbReference>
<dbReference type="GO" id="GO:0008198">
    <property type="term" value="F:ferrous iron binding"/>
    <property type="evidence" value="ECO:0007669"/>
    <property type="project" value="TreeGrafter"/>
</dbReference>
<dbReference type="GO" id="GO:0016226">
    <property type="term" value="P:iron-sulfur cluster assembly"/>
    <property type="evidence" value="ECO:0007669"/>
    <property type="project" value="UniProtKB-UniRule"/>
</dbReference>
<dbReference type="CDD" id="cd00503">
    <property type="entry name" value="Frataxin"/>
    <property type="match status" value="1"/>
</dbReference>
<dbReference type="FunFam" id="3.30.920.10:FF:000001">
    <property type="entry name" value="Iron-sulfur cluster assembly protein CyaY"/>
    <property type="match status" value="1"/>
</dbReference>
<dbReference type="Gene3D" id="3.30.920.10">
    <property type="entry name" value="Frataxin/CyaY"/>
    <property type="match status" value="1"/>
</dbReference>
<dbReference type="HAMAP" id="MF_00142">
    <property type="entry name" value="CyaY"/>
    <property type="match status" value="1"/>
</dbReference>
<dbReference type="InterPro" id="IPR047584">
    <property type="entry name" value="CyaY"/>
</dbReference>
<dbReference type="InterPro" id="IPR002908">
    <property type="entry name" value="Frataxin/CyaY"/>
</dbReference>
<dbReference type="InterPro" id="IPR036524">
    <property type="entry name" value="Frataxin/CyaY_sf"/>
</dbReference>
<dbReference type="InterPro" id="IPR020895">
    <property type="entry name" value="Frataxin_CS"/>
</dbReference>
<dbReference type="NCBIfam" id="TIGR03421">
    <property type="entry name" value="FeS_CyaY"/>
    <property type="match status" value="1"/>
</dbReference>
<dbReference type="PANTHER" id="PTHR16821">
    <property type="entry name" value="FRATAXIN"/>
    <property type="match status" value="1"/>
</dbReference>
<dbReference type="PANTHER" id="PTHR16821:SF2">
    <property type="entry name" value="FRATAXIN, MITOCHONDRIAL"/>
    <property type="match status" value="1"/>
</dbReference>
<dbReference type="Pfam" id="PF01491">
    <property type="entry name" value="Frataxin_Cyay"/>
    <property type="match status" value="1"/>
</dbReference>
<dbReference type="SMART" id="SM01219">
    <property type="entry name" value="Frataxin_Cyay"/>
    <property type="match status" value="1"/>
</dbReference>
<dbReference type="SUPFAM" id="SSF55387">
    <property type="entry name" value="Frataxin/Nqo15-like"/>
    <property type="match status" value="1"/>
</dbReference>
<dbReference type="PROSITE" id="PS01344">
    <property type="entry name" value="FRATAXIN_1"/>
    <property type="match status" value="1"/>
</dbReference>
<dbReference type="PROSITE" id="PS50810">
    <property type="entry name" value="FRATAXIN_2"/>
    <property type="match status" value="1"/>
</dbReference>
<feature type="chain" id="PRO_1000203285" description="Iron-sulfur cluster assembly protein CyaY">
    <location>
        <begin position="1"/>
        <end position="106"/>
    </location>
</feature>
<organism>
    <name type="scientific">Escherichia coli (strain K12 / MC4100 / BW2952)</name>
    <dbReference type="NCBI Taxonomy" id="595496"/>
    <lineage>
        <taxon>Bacteria</taxon>
        <taxon>Pseudomonadati</taxon>
        <taxon>Pseudomonadota</taxon>
        <taxon>Gammaproteobacteria</taxon>
        <taxon>Enterobacterales</taxon>
        <taxon>Enterobacteriaceae</taxon>
        <taxon>Escherichia</taxon>
    </lineage>
</organism>
<accession>C4ZZ71</accession>
<comment type="function">
    <text evidence="1">Involved in iron-sulfur (Fe-S) cluster assembly. May act as a regulator of Fe-S biogenesis.</text>
</comment>
<comment type="similarity">
    <text evidence="1">Belongs to the frataxin family.</text>
</comment>
<evidence type="ECO:0000255" key="1">
    <source>
        <dbReference type="HAMAP-Rule" id="MF_00142"/>
    </source>
</evidence>
<proteinExistence type="inferred from homology"/>
<keyword id="KW-0408">Iron</keyword>
<keyword id="KW-0479">Metal-binding</keyword>
<sequence length="106" mass="12231">MNDSEFHRLADQLWLTIEERLDDWDGDSDIDCEINGGVLTITFENGSKIIINRQEPLHQVWLATKQGGYHFDLKGDEWICDRSGETFWDLLEQAATQQAGETVSFR</sequence>